<feature type="chain" id="PRO_0000175171" description="Ferrochelatase">
    <location>
        <begin position="1"/>
        <end position="364"/>
    </location>
</feature>
<feature type="binding site" evidence="1">
    <location>
        <position position="211"/>
    </location>
    <ligand>
        <name>Fe cation</name>
        <dbReference type="ChEBI" id="CHEBI:24875"/>
    </ligand>
</feature>
<feature type="binding site" evidence="1">
    <location>
        <position position="292"/>
    </location>
    <ligand>
        <name>Fe cation</name>
        <dbReference type="ChEBI" id="CHEBI:24875"/>
    </ligand>
</feature>
<organism>
    <name type="scientific">Nitrosomonas europaea (strain ATCC 19718 / CIP 103999 / KCTC 2705 / NBRC 14298)</name>
    <dbReference type="NCBI Taxonomy" id="228410"/>
    <lineage>
        <taxon>Bacteria</taxon>
        <taxon>Pseudomonadati</taxon>
        <taxon>Pseudomonadota</taxon>
        <taxon>Betaproteobacteria</taxon>
        <taxon>Nitrosomonadales</taxon>
        <taxon>Nitrosomonadaceae</taxon>
        <taxon>Nitrosomonas</taxon>
    </lineage>
</organism>
<accession>Q82UK8</accession>
<gene>
    <name evidence="1" type="primary">hemH</name>
    <name type="ordered locus">NE1476</name>
</gene>
<proteinExistence type="inferred from homology"/>
<keyword id="KW-0963">Cytoplasm</keyword>
<keyword id="KW-0350">Heme biosynthesis</keyword>
<keyword id="KW-0408">Iron</keyword>
<keyword id="KW-0456">Lyase</keyword>
<keyword id="KW-0479">Metal-binding</keyword>
<keyword id="KW-0627">Porphyrin biosynthesis</keyword>
<keyword id="KW-1185">Reference proteome</keyword>
<protein>
    <recommendedName>
        <fullName evidence="1">Ferrochelatase</fullName>
        <ecNumber evidence="1">4.98.1.1</ecNumber>
    </recommendedName>
    <alternativeName>
        <fullName evidence="1">Heme synthase</fullName>
    </alternativeName>
    <alternativeName>
        <fullName evidence="1">Protoheme ferro-lyase</fullName>
    </alternativeName>
</protein>
<name>HEMH_NITEU</name>
<evidence type="ECO:0000255" key="1">
    <source>
        <dbReference type="HAMAP-Rule" id="MF_00323"/>
    </source>
</evidence>
<comment type="function">
    <text evidence="1">Catalyzes the ferrous insertion into protoporphyrin IX.</text>
</comment>
<comment type="catalytic activity">
    <reaction evidence="1">
        <text>heme b + 2 H(+) = protoporphyrin IX + Fe(2+)</text>
        <dbReference type="Rhea" id="RHEA:22584"/>
        <dbReference type="ChEBI" id="CHEBI:15378"/>
        <dbReference type="ChEBI" id="CHEBI:29033"/>
        <dbReference type="ChEBI" id="CHEBI:57306"/>
        <dbReference type="ChEBI" id="CHEBI:60344"/>
        <dbReference type="EC" id="4.98.1.1"/>
    </reaction>
</comment>
<comment type="pathway">
    <text evidence="1">Porphyrin-containing compound metabolism; protoheme biosynthesis; protoheme from protoporphyrin-IX: step 1/1.</text>
</comment>
<comment type="subcellular location">
    <subcellularLocation>
        <location evidence="1">Cytoplasm</location>
    </subcellularLocation>
</comment>
<comment type="similarity">
    <text evidence="1">Belongs to the ferrochelatase family.</text>
</comment>
<dbReference type="EC" id="4.98.1.1" evidence="1"/>
<dbReference type="EMBL" id="AL954747">
    <property type="protein sequence ID" value="CAD85387.1"/>
    <property type="molecule type" value="Genomic_DNA"/>
</dbReference>
<dbReference type="RefSeq" id="WP_011112044.1">
    <property type="nucleotide sequence ID" value="NC_004757.1"/>
</dbReference>
<dbReference type="SMR" id="Q82UK8"/>
<dbReference type="STRING" id="228410.NE1476"/>
<dbReference type="DNASU" id="1082427"/>
<dbReference type="GeneID" id="87104650"/>
<dbReference type="KEGG" id="neu:NE1476"/>
<dbReference type="eggNOG" id="COG0276">
    <property type="taxonomic scope" value="Bacteria"/>
</dbReference>
<dbReference type="HOGENOM" id="CLU_018884_0_0_4"/>
<dbReference type="OrthoDB" id="9809741at2"/>
<dbReference type="PhylomeDB" id="Q82UK8"/>
<dbReference type="UniPathway" id="UPA00252">
    <property type="reaction ID" value="UER00325"/>
</dbReference>
<dbReference type="Proteomes" id="UP000001416">
    <property type="component" value="Chromosome"/>
</dbReference>
<dbReference type="GO" id="GO:0005737">
    <property type="term" value="C:cytoplasm"/>
    <property type="evidence" value="ECO:0007669"/>
    <property type="project" value="UniProtKB-SubCell"/>
</dbReference>
<dbReference type="GO" id="GO:0004325">
    <property type="term" value="F:ferrochelatase activity"/>
    <property type="evidence" value="ECO:0007669"/>
    <property type="project" value="UniProtKB-UniRule"/>
</dbReference>
<dbReference type="GO" id="GO:0046872">
    <property type="term" value="F:metal ion binding"/>
    <property type="evidence" value="ECO:0007669"/>
    <property type="project" value="UniProtKB-KW"/>
</dbReference>
<dbReference type="GO" id="GO:0006783">
    <property type="term" value="P:heme biosynthetic process"/>
    <property type="evidence" value="ECO:0007669"/>
    <property type="project" value="UniProtKB-UniRule"/>
</dbReference>
<dbReference type="CDD" id="cd00419">
    <property type="entry name" value="Ferrochelatase_C"/>
    <property type="match status" value="1"/>
</dbReference>
<dbReference type="CDD" id="cd03411">
    <property type="entry name" value="Ferrochelatase_N"/>
    <property type="match status" value="1"/>
</dbReference>
<dbReference type="FunFam" id="3.40.50.1400:FF:000002">
    <property type="entry name" value="Ferrochelatase"/>
    <property type="match status" value="1"/>
</dbReference>
<dbReference type="Gene3D" id="3.40.50.1400">
    <property type="match status" value="2"/>
</dbReference>
<dbReference type="HAMAP" id="MF_00323">
    <property type="entry name" value="Ferrochelatase"/>
    <property type="match status" value="1"/>
</dbReference>
<dbReference type="InterPro" id="IPR001015">
    <property type="entry name" value="Ferrochelatase"/>
</dbReference>
<dbReference type="InterPro" id="IPR019772">
    <property type="entry name" value="Ferrochelatase_AS"/>
</dbReference>
<dbReference type="InterPro" id="IPR033644">
    <property type="entry name" value="Ferrochelatase_C"/>
</dbReference>
<dbReference type="InterPro" id="IPR033659">
    <property type="entry name" value="Ferrochelatase_N"/>
</dbReference>
<dbReference type="NCBIfam" id="TIGR00109">
    <property type="entry name" value="hemH"/>
    <property type="match status" value="1"/>
</dbReference>
<dbReference type="PANTHER" id="PTHR11108">
    <property type="entry name" value="FERROCHELATASE"/>
    <property type="match status" value="1"/>
</dbReference>
<dbReference type="PANTHER" id="PTHR11108:SF1">
    <property type="entry name" value="FERROCHELATASE, MITOCHONDRIAL"/>
    <property type="match status" value="1"/>
</dbReference>
<dbReference type="Pfam" id="PF00762">
    <property type="entry name" value="Ferrochelatase"/>
    <property type="match status" value="1"/>
</dbReference>
<dbReference type="SUPFAM" id="SSF53800">
    <property type="entry name" value="Chelatase"/>
    <property type="match status" value="1"/>
</dbReference>
<dbReference type="PROSITE" id="PS00534">
    <property type="entry name" value="FERROCHELATASE"/>
    <property type="match status" value="1"/>
</dbReference>
<sequence>MTRMLPEPAYRHGSVGKIGVLMINLGTPDAPTAKALRAYLKQFLSEPRIVEFPRWLWWFILNGIILNVRPAKSAKKYEQIWTSEGSPLRVHTARQTALVAALLEQQADSSLVVEYAMIIGNPSIAEKLQQMKVQGCDRILVLPLFPQYAASSTGCVLDGVFSELRKMRNIPDIRTVRHYHDDPGYIAALAQNVRDYWEKHGQPDKLIISFHGVPRKTLEMGDPYHCECQKTGRLLAEALELADDRYQICFQSRFGFAQWLGPYTAEILAELGKQKTGRVDVVCPGFVSDCLETLEEIALEGKAIFTEAGGGEFHYIPSLNEHPLWIEAIGNIIQTHLTGWADRRLSEEAAERSRKRALALGARE</sequence>
<reference key="1">
    <citation type="journal article" date="2003" name="J. Bacteriol.">
        <title>Complete genome sequence of the ammonia-oxidizing bacterium and obligate chemolithoautotroph Nitrosomonas europaea.</title>
        <authorList>
            <person name="Chain P."/>
            <person name="Lamerdin J.E."/>
            <person name="Larimer F.W."/>
            <person name="Regala W."/>
            <person name="Lao V."/>
            <person name="Land M.L."/>
            <person name="Hauser L."/>
            <person name="Hooper A.B."/>
            <person name="Klotz M.G."/>
            <person name="Norton J."/>
            <person name="Sayavedra-Soto L.A."/>
            <person name="Arciero D.M."/>
            <person name="Hommes N.G."/>
            <person name="Whittaker M.M."/>
            <person name="Arp D.J."/>
        </authorList>
    </citation>
    <scope>NUCLEOTIDE SEQUENCE [LARGE SCALE GENOMIC DNA]</scope>
    <source>
        <strain>ATCC 19718 / CIP 103999 / KCTC 2705 / NBRC 14298</strain>
    </source>
</reference>